<dbReference type="EMBL" id="CM003162">
    <property type="protein sequence ID" value="KIS65764.1"/>
    <property type="molecule type" value="Genomic_DNA"/>
</dbReference>
<dbReference type="RefSeq" id="XP_011392750.1">
    <property type="nucleotide sequence ID" value="XM_011394448.1"/>
</dbReference>
<dbReference type="EnsemblFungi" id="KIS65764">
    <property type="protein sequence ID" value="KIS65764"/>
    <property type="gene ID" value="UMAG_11813"/>
</dbReference>
<dbReference type="GeneID" id="23567651"/>
<dbReference type="KEGG" id="uma:UMAG_11813"/>
<dbReference type="VEuPathDB" id="FungiDB:UMAG_11813"/>
<dbReference type="InParanoid" id="A0A0D1DMK2"/>
<dbReference type="Proteomes" id="UP000000561">
    <property type="component" value="Chromosome 23"/>
</dbReference>
<organism>
    <name type="scientific">Mycosarcoma maydis</name>
    <name type="common">Corn smut fungus</name>
    <name type="synonym">Ustilago maydis</name>
    <dbReference type="NCBI Taxonomy" id="5270"/>
    <lineage>
        <taxon>Eukaryota</taxon>
        <taxon>Fungi</taxon>
        <taxon>Dikarya</taxon>
        <taxon>Basidiomycota</taxon>
        <taxon>Ustilaginomycotina</taxon>
        <taxon>Ustilaginomycetes</taxon>
        <taxon>Ustilaginales</taxon>
        <taxon>Ustilaginaceae</taxon>
        <taxon>Mycosarcoma</taxon>
    </lineage>
</organism>
<evidence type="ECO:0000255" key="1"/>
<evidence type="ECO:0000256" key="2">
    <source>
        <dbReference type="SAM" id="MobiDB-lite"/>
    </source>
</evidence>
<evidence type="ECO:0000269" key="3">
    <source>
    </source>
</evidence>
<evidence type="ECO:0000269" key="4">
    <source>
    </source>
</evidence>
<evidence type="ECO:0000269" key="5">
    <source>
    </source>
</evidence>
<evidence type="ECO:0000303" key="6">
    <source>
    </source>
</evidence>
<evidence type="ECO:0000305" key="7">
    <source>
    </source>
</evidence>
<sequence>MTYSKIACSLGKRGIARAPNQASSFFLLLFLFAKFSQQLSPSPCLASSGVAKSRGPASTDRPCSASMAEAVLDLLADCSPTASVPVAANAPSCAGVAASAGAQGASPSSQVSPQA</sequence>
<name>ORF3_MYCMD</name>
<feature type="signal peptide" evidence="1">
    <location>
        <begin position="1"/>
        <end position="38"/>
    </location>
</feature>
<feature type="chain" id="PRO_5002244825" description="Ustilagic acid biosynthesis cluster protein orf3" evidence="1">
    <location>
        <begin position="39"/>
        <end position="115"/>
    </location>
</feature>
<feature type="region of interest" description="Disordered" evidence="2">
    <location>
        <begin position="42"/>
        <end position="62"/>
    </location>
</feature>
<accession>A0A0D1DMK2</accession>
<proteinExistence type="evidence at transcript level"/>
<reference key="1">
    <citation type="journal article" date="2006" name="Nature">
        <title>Insights from the genome of the biotrophic fungal plant pathogen Ustilago maydis.</title>
        <authorList>
            <person name="Kaemper J."/>
            <person name="Kahmann R."/>
            <person name="Boelker M."/>
            <person name="Ma L.-J."/>
            <person name="Brefort T."/>
            <person name="Saville B.J."/>
            <person name="Banuett F."/>
            <person name="Kronstad J.W."/>
            <person name="Gold S.E."/>
            <person name="Mueller O."/>
            <person name="Perlin M.H."/>
            <person name="Woesten H.A.B."/>
            <person name="de Vries R."/>
            <person name="Ruiz-Herrera J."/>
            <person name="Reynaga-Pena C.G."/>
            <person name="Snetselaar K."/>
            <person name="McCann M."/>
            <person name="Perez-Martin J."/>
            <person name="Feldbruegge M."/>
            <person name="Basse C.W."/>
            <person name="Steinberg G."/>
            <person name="Ibeas J.I."/>
            <person name="Holloman W."/>
            <person name="Guzman P."/>
            <person name="Farman M.L."/>
            <person name="Stajich J.E."/>
            <person name="Sentandreu R."/>
            <person name="Gonzalez-Prieto J.M."/>
            <person name="Kennell J.C."/>
            <person name="Molina L."/>
            <person name="Schirawski J."/>
            <person name="Mendoza-Mendoza A."/>
            <person name="Greilinger D."/>
            <person name="Muench K."/>
            <person name="Roessel N."/>
            <person name="Scherer M."/>
            <person name="Vranes M."/>
            <person name="Ladendorf O."/>
            <person name="Vincon V."/>
            <person name="Fuchs U."/>
            <person name="Sandrock B."/>
            <person name="Meng S."/>
            <person name="Ho E.C.H."/>
            <person name="Cahill M.J."/>
            <person name="Boyce K.J."/>
            <person name="Klose J."/>
            <person name="Klosterman S.J."/>
            <person name="Deelstra H.J."/>
            <person name="Ortiz-Castellanos L."/>
            <person name="Li W."/>
            <person name="Sanchez-Alonso P."/>
            <person name="Schreier P.H."/>
            <person name="Haeuser-Hahn I."/>
            <person name="Vaupel M."/>
            <person name="Koopmann E."/>
            <person name="Friedrich G."/>
            <person name="Voss H."/>
            <person name="Schlueter T."/>
            <person name="Margolis J."/>
            <person name="Platt D."/>
            <person name="Swimmer C."/>
            <person name="Gnirke A."/>
            <person name="Chen F."/>
            <person name="Vysotskaia V."/>
            <person name="Mannhaupt G."/>
            <person name="Gueldener U."/>
            <person name="Muensterkoetter M."/>
            <person name="Haase D."/>
            <person name="Oesterheld M."/>
            <person name="Mewes H.-W."/>
            <person name="Mauceli E.W."/>
            <person name="DeCaprio D."/>
            <person name="Wade C.M."/>
            <person name="Butler J."/>
            <person name="Young S.K."/>
            <person name="Jaffe D.B."/>
            <person name="Calvo S.E."/>
            <person name="Nusbaum C."/>
            <person name="Galagan J.E."/>
            <person name="Birren B.W."/>
        </authorList>
    </citation>
    <scope>NUCLEOTIDE SEQUENCE [LARGE SCALE GENOMIC DNA]</scope>
    <source>
        <strain>DSM 14603 / FGSC 9021 / UM521</strain>
    </source>
</reference>
<reference key="2">
    <citation type="submission" date="2014-09" db="EMBL/GenBank/DDBJ databases">
        <authorList>
            <person name="Gueldener U."/>
            <person name="Muensterkoetter M."/>
            <person name="Walter M.C."/>
            <person name="Mannhaupt G."/>
            <person name="Kahmann R."/>
        </authorList>
    </citation>
    <scope>GENOME REANNOTATION</scope>
    <source>
        <strain>DSM 14603 / FGSC 9021 / UM521</strain>
    </source>
</reference>
<reference key="3">
    <citation type="journal article" date="2005" name="Appl. Environ. Microbiol.">
        <title>Genetic analysis of biosurfactant production in Ustilago maydis.</title>
        <authorList>
            <person name="Hewald S."/>
            <person name="Josephs K."/>
            <person name="Boelker M."/>
        </authorList>
    </citation>
    <scope>FUNCTION</scope>
</reference>
<reference key="4">
    <citation type="journal article" date="2007" name="Mol. Microbiol.">
        <title>A biosynthetic gene cluster for a secreted cellobiose lipid with antifungal activity from Ustilago maydis.</title>
        <authorList>
            <person name="Teichmann B."/>
            <person name="Linne U."/>
            <person name="Hewald S."/>
            <person name="Marahiel M.A."/>
            <person name="Boelker M."/>
        </authorList>
    </citation>
    <scope>FUNCTION</scope>
    <scope>INDUCTION</scope>
    <scope>PATHWAY</scope>
</reference>
<reference key="5">
    <citation type="journal article" date="2010" name="Appl. Environ. Microbiol.">
        <title>Activation of the ustilagic acid biosynthesis gene cluster in Ustilago maydis by the C2H2 zinc finger transcription factor Rua1.</title>
        <authorList>
            <person name="Teichmann B."/>
            <person name="Liu L."/>
            <person name="Schink K.O."/>
            <person name="Boelker M."/>
        </authorList>
    </citation>
    <scope>INDUCTION</scope>
</reference>
<keyword id="KW-1185">Reference proteome</keyword>
<keyword id="KW-0732">Signal</keyword>
<protein>
    <recommendedName>
        <fullName evidence="6">Ustilagic acid biosynthesis cluster protein orf3</fullName>
    </recommendedName>
</protein>
<comment type="function">
    <text evidence="3 4 7">Part of the gene cluster that mediates the biosynthesis of the glycolipid biosurfactant ustilagic acid (UA) (PubMed:15932999, PubMed:17850255). UA is a secreted cellobiose glycolipid that is toxic for many microorganisms and confers biocontrol activity to U.maydis (PubMed:15932999, PubMed:17850255). UA consists of 15,16-dihydroxypalmitic or 2,15,16-trihydroxypalmitic acid, which is O-glycosidically linked to cellobiose at its terminal hydroxyl group (PubMed:17850255). In addition, the cellobiose moiety is acetylated and acylated with a short-chain hydroxy fatty acid (PubMed:17850255). UA biosynthesis starts with omega-hydroxylation of palmitic acid catalyzed by the cytochrome P450 monooxygenase cyp1 (PubMed:17850255). Terminal hydroxylation of palmitic acid precedes subterminal hydroxylation catalyzed by the cytochrome P450 monooxygenase cyp2 (PubMed:17850255). Sequential glucosylation of the hydroxy fatty acid is probably catalyzed by the glycosyltransferase ugt1 (Probable). The cellobiose lipid is further decorated by acetylation of the proximal glucose residue and by acylation with a short-chain beta-hydroxy fatty acid at the distal glucose residue (Probable). The acyltransferase uat1 may be a good candidate for catalyzing either acetylation or acylation of the cellobiose lipid (Probable). The fatty acid synthase fas2 may be involved in synthesis of the carbon backbone of the short-chain beta-hydroxy fatty acid esterified to the cellobiose disaccharide (Probable). The secreted UA consists of a mixture of both alpha-hydroxylated and non-hydroxylated glycolipids; therefore, alpha-hydroxylation of the long-chain fatty, catalyzed by the fatty acid hydroxylase ahd1, occurs late in UA biosynthesis and may be the last step before secretion (PubMed:17850255).</text>
</comment>
<comment type="pathway">
    <text evidence="7">Secondary metabolite biosynthesis.</text>
</comment>
<comment type="induction">
    <text evidence="4 5">Expression is strongly induced under conditions of nitrogen starvation (PubMed:17850255). Expression is positively regulated by the cluster-specific transcription factor rua1 that recognizes and binds to the specific 5'-T/G-G/T-C-G-C-A-T-A/T-C/T-C/T-G/A-3' upstream activating sequence found in all promoters of the UA biosynthesis genes (PubMed:20173069).</text>
</comment>
<gene>
    <name evidence="6" type="primary">orf3</name>
    <name type="ORF">UMAG_11813</name>
</gene>